<dbReference type="EC" id="3.4.21.-"/>
<dbReference type="EMBL" id="AY437853">
    <property type="protein sequence ID" value="AAS45667.1"/>
    <property type="status" value="ALT_SEQ"/>
    <property type="molecule type" value="Genomic_DNA"/>
</dbReference>
<dbReference type="SMR" id="Q64K35"/>
<dbReference type="GlyCosmos" id="Q64K35">
    <property type="glycosylation" value="4 sites, No reported glycans"/>
</dbReference>
<dbReference type="GO" id="GO:0005576">
    <property type="term" value="C:extracellular region"/>
    <property type="evidence" value="ECO:0007669"/>
    <property type="project" value="UniProtKB-SubCell"/>
</dbReference>
<dbReference type="GO" id="GO:0004252">
    <property type="term" value="F:serine-type endopeptidase activity"/>
    <property type="evidence" value="ECO:0007669"/>
    <property type="project" value="InterPro"/>
</dbReference>
<dbReference type="GO" id="GO:0006508">
    <property type="term" value="P:proteolysis"/>
    <property type="evidence" value="ECO:0007669"/>
    <property type="project" value="UniProtKB-KW"/>
</dbReference>
<dbReference type="CDD" id="cd04077">
    <property type="entry name" value="Peptidases_S8_PCSK9_ProteinaseK_like"/>
    <property type="match status" value="1"/>
</dbReference>
<dbReference type="FunFam" id="3.40.50.200:FF:000007">
    <property type="entry name" value="Subtilisin-like serine protease"/>
    <property type="match status" value="1"/>
</dbReference>
<dbReference type="Gene3D" id="3.30.70.80">
    <property type="entry name" value="Peptidase S8 propeptide/proteinase inhibitor I9"/>
    <property type="match status" value="1"/>
</dbReference>
<dbReference type="Gene3D" id="3.40.50.200">
    <property type="entry name" value="Peptidase S8/S53 domain"/>
    <property type="match status" value="1"/>
</dbReference>
<dbReference type="InterPro" id="IPR034193">
    <property type="entry name" value="PCSK9_ProteinaseK-like"/>
</dbReference>
<dbReference type="InterPro" id="IPR000209">
    <property type="entry name" value="Peptidase_S8/S53_dom"/>
</dbReference>
<dbReference type="InterPro" id="IPR036852">
    <property type="entry name" value="Peptidase_S8/S53_dom_sf"/>
</dbReference>
<dbReference type="InterPro" id="IPR023827">
    <property type="entry name" value="Peptidase_S8_Asp-AS"/>
</dbReference>
<dbReference type="InterPro" id="IPR022398">
    <property type="entry name" value="Peptidase_S8_His-AS"/>
</dbReference>
<dbReference type="InterPro" id="IPR023828">
    <property type="entry name" value="Peptidase_S8_Ser-AS"/>
</dbReference>
<dbReference type="InterPro" id="IPR050131">
    <property type="entry name" value="Peptidase_S8_subtilisin-like"/>
</dbReference>
<dbReference type="InterPro" id="IPR015500">
    <property type="entry name" value="Peptidase_S8_subtilisin-rel"/>
</dbReference>
<dbReference type="InterPro" id="IPR010259">
    <property type="entry name" value="S8pro/Inhibitor_I9"/>
</dbReference>
<dbReference type="InterPro" id="IPR037045">
    <property type="entry name" value="S8pro/Inhibitor_I9_sf"/>
</dbReference>
<dbReference type="PANTHER" id="PTHR43806:SF58">
    <property type="entry name" value="ALKALINE PROTEASE 1-RELATED"/>
    <property type="match status" value="1"/>
</dbReference>
<dbReference type="PANTHER" id="PTHR43806">
    <property type="entry name" value="PEPTIDASE S8"/>
    <property type="match status" value="1"/>
</dbReference>
<dbReference type="Pfam" id="PF05922">
    <property type="entry name" value="Inhibitor_I9"/>
    <property type="match status" value="1"/>
</dbReference>
<dbReference type="Pfam" id="PF00082">
    <property type="entry name" value="Peptidase_S8"/>
    <property type="match status" value="1"/>
</dbReference>
<dbReference type="PRINTS" id="PR00723">
    <property type="entry name" value="SUBTILISIN"/>
</dbReference>
<dbReference type="SUPFAM" id="SSF52743">
    <property type="entry name" value="Subtilisin-like"/>
    <property type="match status" value="1"/>
</dbReference>
<dbReference type="PROSITE" id="PS51892">
    <property type="entry name" value="SUBTILASE"/>
    <property type="match status" value="1"/>
</dbReference>
<dbReference type="PROSITE" id="PS00136">
    <property type="entry name" value="SUBTILASE_ASP"/>
    <property type="match status" value="1"/>
</dbReference>
<dbReference type="PROSITE" id="PS00137">
    <property type="entry name" value="SUBTILASE_HIS"/>
    <property type="match status" value="1"/>
</dbReference>
<dbReference type="PROSITE" id="PS00138">
    <property type="entry name" value="SUBTILASE_SER"/>
    <property type="match status" value="1"/>
</dbReference>
<organism>
    <name type="scientific">Arthroderma benhamiae</name>
    <name type="common">Trichophyton mentagrophytes</name>
    <dbReference type="NCBI Taxonomy" id="63400"/>
    <lineage>
        <taxon>Eukaryota</taxon>
        <taxon>Fungi</taxon>
        <taxon>Dikarya</taxon>
        <taxon>Ascomycota</taxon>
        <taxon>Pezizomycotina</taxon>
        <taxon>Eurotiomycetes</taxon>
        <taxon>Eurotiomycetidae</taxon>
        <taxon>Onygenales</taxon>
        <taxon>Arthrodermataceae</taxon>
        <taxon>Trichophyton</taxon>
    </lineage>
</organism>
<gene>
    <name type="primary">SUB2</name>
</gene>
<sequence>MQLLNFGLLLLPFVAGDLAPQPEPLLAGPSDVVPGQYIVTLKEGLTSAQIRDHKKWVSSVHRANLDSFAAGASGVETEGIMKHFHIHDLNMYSGGFDEKTVEDLSRNPYVKSVHPDQHVYLAKTVTQRQARWGLGYMSSKGKPVPLHSTLVDYSYDDKAGEGVWAYVLDTGINVNHVEFEGRGILGHNAIPNKPHTDEFGHGTYVAGIIAGKTYGVAKKANVVSAKAFDTGSSTYNYILETYDWIVRNITDSNRKNKAVINLSISGAKYQPFDDAVEKAFKAGITTVVAAGNDGKDAKNNTPASSPNAITVGAVRWENTRPSFSNYGKLVDIWAPGELIKSCWKGGNNATSTQSGTSAASPHVAGLVAYLMSIENLPSPSAVTARVLNLTIPNLVKDAKDSPNRVAYNGIQERKFKLPK</sequence>
<feature type="signal peptide" evidence="2">
    <location>
        <begin position="1"/>
        <end position="16"/>
    </location>
</feature>
<feature type="propeptide" id="PRO_0000380765" evidence="1">
    <location>
        <begin position="17"/>
        <end position="122"/>
    </location>
</feature>
<feature type="chain" id="PRO_0000380766" description="Subtilisin-like protease 2">
    <location>
        <begin position="123"/>
        <end position="419"/>
    </location>
</feature>
<feature type="domain" description="Inhibitor I9" evidence="2">
    <location>
        <begin position="36"/>
        <end position="122"/>
    </location>
</feature>
<feature type="domain" description="Peptidase S8" evidence="3">
    <location>
        <begin position="131"/>
        <end position="419"/>
    </location>
</feature>
<feature type="active site" description="Charge relay system" evidence="3">
    <location>
        <position position="169"/>
    </location>
</feature>
<feature type="active site" description="Charge relay system" evidence="3">
    <location>
        <position position="201"/>
    </location>
</feature>
<feature type="active site" description="Charge relay system" evidence="3">
    <location>
        <position position="357"/>
    </location>
</feature>
<feature type="glycosylation site" description="N-linked (GlcNAc...) asparagine" evidence="2">
    <location>
        <position position="248"/>
    </location>
</feature>
<feature type="glycosylation site" description="N-linked (GlcNAc...) asparagine" evidence="2">
    <location>
        <position position="261"/>
    </location>
</feature>
<feature type="glycosylation site" description="N-linked (GlcNAc...) asparagine" evidence="2">
    <location>
        <position position="348"/>
    </location>
</feature>
<feature type="glycosylation site" description="N-linked (GlcNAc...) asparagine" evidence="2">
    <location>
        <position position="388"/>
    </location>
</feature>
<protein>
    <recommendedName>
        <fullName>Subtilisin-like protease 2</fullName>
        <ecNumber>3.4.21.-</ecNumber>
    </recommendedName>
</protein>
<keyword id="KW-0325">Glycoprotein</keyword>
<keyword id="KW-0378">Hydrolase</keyword>
<keyword id="KW-0645">Protease</keyword>
<keyword id="KW-0964">Secreted</keyword>
<keyword id="KW-0720">Serine protease</keyword>
<keyword id="KW-0732">Signal</keyword>
<keyword id="KW-0843">Virulence</keyword>
<keyword id="KW-0865">Zymogen</keyword>
<name>SUB2_ARTBE</name>
<proteinExistence type="inferred from homology"/>
<comment type="function">
    <text evidence="1">Secreted subtilisin-like serine protease with keratinolytic activity that contributes to pathogenicity.</text>
</comment>
<comment type="subcellular location">
    <subcellularLocation>
        <location evidence="1">Secreted</location>
    </subcellularLocation>
</comment>
<comment type="similarity">
    <text evidence="4">Belongs to the peptidase S8 family.</text>
</comment>
<comment type="sequence caution" evidence="4">
    <conflict type="erroneous gene model prediction">
        <sequence resource="EMBL-CDS" id="AAS45667"/>
    </conflict>
</comment>
<reference key="1">
    <citation type="journal article" date="2004" name="Gene">
        <title>Secreted subtilisin gene family in Trichophyton rubrum.</title>
        <authorList>
            <person name="Jousson O."/>
            <person name="Lechenne B."/>
            <person name="Bontems O."/>
            <person name="Mignon B."/>
            <person name="Reichard U."/>
            <person name="Barblan J."/>
            <person name="Quadroni M."/>
            <person name="Monod M."/>
        </authorList>
    </citation>
    <scope>NUCLEOTIDE SEQUENCE [GENOMIC DNA]</scope>
</reference>
<accession>Q64K35</accession>
<evidence type="ECO:0000250" key="1"/>
<evidence type="ECO:0000255" key="2"/>
<evidence type="ECO:0000255" key="3">
    <source>
        <dbReference type="PROSITE-ProRule" id="PRU01240"/>
    </source>
</evidence>
<evidence type="ECO:0000305" key="4"/>